<feature type="transit peptide" description="Chloroplast">
    <location>
        <begin position="1"/>
        <end position="30"/>
    </location>
</feature>
<feature type="chain" id="PRO_0000029388" description="Photosystem I reaction center subunit V, chloroplastic">
    <location>
        <begin position="31"/>
        <end position="126"/>
    </location>
</feature>
<feature type="transmembrane region" description="Helical" evidence="1">
    <location>
        <begin position="36"/>
        <end position="56"/>
    </location>
</feature>
<feature type="transmembrane region" description="Helical" evidence="1">
    <location>
        <begin position="97"/>
        <end position="117"/>
    </location>
</feature>
<feature type="helix" evidence="6">
    <location>
        <begin position="34"/>
        <end position="51"/>
    </location>
</feature>
<feature type="helix" evidence="6">
    <location>
        <begin position="54"/>
        <end position="61"/>
    </location>
</feature>
<feature type="turn" evidence="7">
    <location>
        <begin position="64"/>
        <end position="66"/>
    </location>
</feature>
<feature type="helix" evidence="5">
    <location>
        <begin position="76"/>
        <end position="79"/>
    </location>
</feature>
<feature type="helix" evidence="7">
    <location>
        <begin position="84"/>
        <end position="87"/>
    </location>
</feature>
<feature type="strand" evidence="4">
    <location>
        <begin position="91"/>
        <end position="93"/>
    </location>
</feature>
<feature type="helix" evidence="6">
    <location>
        <begin position="97"/>
        <end position="119"/>
    </location>
</feature>
<feature type="strand" evidence="3">
    <location>
        <begin position="120"/>
        <end position="122"/>
    </location>
</feature>
<comment type="function">
    <text>Not yet known.</text>
</comment>
<comment type="subcellular location">
    <subcellularLocation>
        <location evidence="2">Plastid</location>
        <location evidence="2">Chloroplast thylakoid membrane</location>
        <topology evidence="2">Multi-pass membrane protein</topology>
    </subcellularLocation>
</comment>
<comment type="similarity">
    <text evidence="2">Belongs to the PsaG/PsaK family.</text>
</comment>
<sequence length="126" mass="13223">MQTLASRPSLRASARVAPRRAPRVAVVTKAALDPQIVISGSTAAFLAIGRFVFLGYQRREANFDSTVGPKTTGATYFDDLQKNSTIFATNDPAGFNIIDVAGWGALGHAVGFAVLAINSLQGANLS</sequence>
<evidence type="ECO:0000255" key="1"/>
<evidence type="ECO:0000305" key="2"/>
<evidence type="ECO:0007829" key="3">
    <source>
        <dbReference type="PDB" id="6IJO"/>
    </source>
</evidence>
<evidence type="ECO:0007829" key="4">
    <source>
        <dbReference type="PDB" id="7D0J"/>
    </source>
</evidence>
<evidence type="ECO:0007829" key="5">
    <source>
        <dbReference type="PDB" id="7DZ7"/>
    </source>
</evidence>
<evidence type="ECO:0007829" key="6">
    <source>
        <dbReference type="PDB" id="7R3K"/>
    </source>
</evidence>
<evidence type="ECO:0007829" key="7">
    <source>
        <dbReference type="PDB" id="8H2U"/>
    </source>
</evidence>
<protein>
    <recommendedName>
        <fullName>Photosystem I reaction center subunit V, chloroplastic</fullName>
    </recommendedName>
    <alternativeName>
        <fullName>Light-harvesting complex I 10 kDa protein</fullName>
    </alternativeName>
    <alternativeName>
        <fullName>P35 protein</fullName>
    </alternativeName>
    <alternativeName>
        <fullName>PSI-G</fullName>
    </alternativeName>
</protein>
<name>PSAG_CHLRE</name>
<keyword id="KW-0002">3D-structure</keyword>
<keyword id="KW-0150">Chloroplast</keyword>
<keyword id="KW-0472">Membrane</keyword>
<keyword id="KW-0602">Photosynthesis</keyword>
<keyword id="KW-0603">Photosystem I</keyword>
<keyword id="KW-0934">Plastid</keyword>
<keyword id="KW-0793">Thylakoid</keyword>
<keyword id="KW-0809">Transit peptide</keyword>
<keyword id="KW-0812">Transmembrane</keyword>
<keyword id="KW-1133">Transmembrane helix</keyword>
<proteinExistence type="evidence at protein level"/>
<reference key="1">
    <citation type="journal article" date="1989" name="Mol. Gen. Genet.">
        <title>Isolation and characterization of cDNA clones encoding photosystem I subunits with molecular masses 11.0, 10.0 and 8.4 kDa from Chlamydomonas reinhardtii.</title>
        <authorList>
            <person name="Franzen L.-G."/>
            <person name="Frank G."/>
            <person name="Zuber H."/>
            <person name="Rochaix J.-D."/>
        </authorList>
    </citation>
    <scope>NUCLEOTIDE SEQUENCE [MRNA]</scope>
    <source>
        <strain>137c / CC-125</strain>
    </source>
</reference>
<organism>
    <name type="scientific">Chlamydomonas reinhardtii</name>
    <name type="common">Chlamydomonas smithii</name>
    <dbReference type="NCBI Taxonomy" id="3055"/>
    <lineage>
        <taxon>Eukaryota</taxon>
        <taxon>Viridiplantae</taxon>
        <taxon>Chlorophyta</taxon>
        <taxon>core chlorophytes</taxon>
        <taxon>Chlorophyceae</taxon>
        <taxon>CS clade</taxon>
        <taxon>Chlamydomonadales</taxon>
        <taxon>Chlamydomonadaceae</taxon>
        <taxon>Chlamydomonas</taxon>
    </lineage>
</organism>
<accession>P14224</accession>
<dbReference type="EMBL" id="X15165">
    <property type="protein sequence ID" value="CAA33257.1"/>
    <property type="molecule type" value="mRNA"/>
</dbReference>
<dbReference type="PIR" id="JQ0371">
    <property type="entry name" value="S06683"/>
</dbReference>
<dbReference type="RefSeq" id="XP_001703126.1">
    <property type="nucleotide sequence ID" value="XM_001703074.1"/>
</dbReference>
<dbReference type="PDB" id="6IJO">
    <property type="method" value="EM"/>
    <property type="resolution" value="3.30 A"/>
    <property type="chains" value="G=3-126"/>
</dbReference>
<dbReference type="PDB" id="6JO5">
    <property type="method" value="EM"/>
    <property type="resolution" value="2.90 A"/>
    <property type="chains" value="G=31-124"/>
</dbReference>
<dbReference type="PDB" id="6JO6">
    <property type="method" value="EM"/>
    <property type="resolution" value="2.90 A"/>
    <property type="chains" value="G=31-124"/>
</dbReference>
<dbReference type="PDB" id="7BGI">
    <property type="method" value="EM"/>
    <property type="resolution" value="2.54 A"/>
    <property type="chains" value="G=32-122"/>
</dbReference>
<dbReference type="PDB" id="7BLX">
    <property type="method" value="EM"/>
    <property type="resolution" value="3.15 A"/>
    <property type="chains" value="G=32-122"/>
</dbReference>
<dbReference type="PDB" id="7D0J">
    <property type="method" value="EM"/>
    <property type="resolution" value="3.42 A"/>
    <property type="chains" value="G=32-122"/>
</dbReference>
<dbReference type="PDB" id="7DZ7">
    <property type="method" value="EM"/>
    <property type="resolution" value="2.84 A"/>
    <property type="chains" value="G=1-126"/>
</dbReference>
<dbReference type="PDB" id="7DZ8">
    <property type="method" value="EM"/>
    <property type="resolution" value="3.16 A"/>
    <property type="chains" value="G=1-126"/>
</dbReference>
<dbReference type="PDB" id="7O01">
    <property type="method" value="EM"/>
    <property type="resolution" value="17.10 A"/>
    <property type="chains" value="G/g=32-122"/>
</dbReference>
<dbReference type="PDB" id="7R3K">
    <property type="method" value="EM"/>
    <property type="resolution" value="2.52 A"/>
    <property type="chains" value="G=1-126"/>
</dbReference>
<dbReference type="PDB" id="7ZQ9">
    <property type="method" value="EM"/>
    <property type="resolution" value="2.74 A"/>
    <property type="chains" value="G=1-126"/>
</dbReference>
<dbReference type="PDB" id="7ZQC">
    <property type="method" value="EM"/>
    <property type="resolution" value="2.31 A"/>
    <property type="chains" value="G=1-126"/>
</dbReference>
<dbReference type="PDB" id="7ZQD">
    <property type="method" value="EM"/>
    <property type="resolution" value="2.97 A"/>
    <property type="chains" value="G/G2=1-126"/>
</dbReference>
<dbReference type="PDB" id="8H2U">
    <property type="method" value="X-ray"/>
    <property type="resolution" value="3.40 A"/>
    <property type="chains" value="G=1-126"/>
</dbReference>
<dbReference type="PDBsum" id="6IJO"/>
<dbReference type="PDBsum" id="6JO5"/>
<dbReference type="PDBsum" id="6JO6"/>
<dbReference type="PDBsum" id="7BGI"/>
<dbReference type="PDBsum" id="7BLX"/>
<dbReference type="PDBsum" id="7D0J"/>
<dbReference type="PDBsum" id="7DZ7"/>
<dbReference type="PDBsum" id="7DZ8"/>
<dbReference type="PDBsum" id="7O01"/>
<dbReference type="PDBsum" id="7R3K"/>
<dbReference type="PDBsum" id="7ZQ9"/>
<dbReference type="PDBsum" id="7ZQC"/>
<dbReference type="PDBsum" id="7ZQD"/>
<dbReference type="PDBsum" id="8H2U"/>
<dbReference type="EMDB" id="EMD-12180"/>
<dbReference type="EMDB" id="EMD-12227"/>
<dbReference type="EMDB" id="EMD-12672"/>
<dbReference type="EMDB" id="EMD-14248"/>
<dbReference type="EMDB" id="EMD-14867"/>
<dbReference type="EMDB" id="EMD-14870"/>
<dbReference type="EMDB" id="EMD-14871"/>
<dbReference type="EMDB" id="EMD-30536"/>
<dbReference type="EMDB" id="EMD-30925"/>
<dbReference type="EMDB" id="EMD-30926"/>
<dbReference type="EMDB" id="EMD-9853"/>
<dbReference type="EMDB" id="EMD-9854"/>
<dbReference type="SMR" id="P14224"/>
<dbReference type="IntAct" id="P14224">
    <property type="interactions" value="2"/>
</dbReference>
<dbReference type="PaxDb" id="3055-EDO96591"/>
<dbReference type="EnsemblPlants" id="PNW75778">
    <property type="protein sequence ID" value="PNW75778"/>
    <property type="gene ID" value="CHLRE_12g560950v5"/>
</dbReference>
<dbReference type="Gramene" id="PNW75778">
    <property type="protein sequence ID" value="PNW75778"/>
    <property type="gene ID" value="CHLRE_12g560950v5"/>
</dbReference>
<dbReference type="KEGG" id="cre:CHLRE_12g560950v5"/>
<dbReference type="eggNOG" id="ENOG502RZ2U">
    <property type="taxonomic scope" value="Eukaryota"/>
</dbReference>
<dbReference type="OMA" id="QNGESHF"/>
<dbReference type="OrthoDB" id="494978at2759"/>
<dbReference type="BioCyc" id="CHLAMY:CHLREDRAFT_165416-MONOMER"/>
<dbReference type="BioCyc" id="MetaCyc:CHLREDRAFT_165416-MONOMER"/>
<dbReference type="GO" id="GO:0009535">
    <property type="term" value="C:chloroplast thylakoid membrane"/>
    <property type="evidence" value="ECO:0007669"/>
    <property type="project" value="UniProtKB-SubCell"/>
</dbReference>
<dbReference type="GO" id="GO:0009522">
    <property type="term" value="C:photosystem I"/>
    <property type="evidence" value="ECO:0007669"/>
    <property type="project" value="UniProtKB-KW"/>
</dbReference>
<dbReference type="GO" id="GO:0015979">
    <property type="term" value="P:photosynthesis"/>
    <property type="evidence" value="ECO:0007669"/>
    <property type="project" value="UniProtKB-KW"/>
</dbReference>
<dbReference type="Gene3D" id="1.10.286.40">
    <property type="entry name" value="Chlorophyll a-b binding protein like"/>
    <property type="match status" value="1"/>
</dbReference>
<dbReference type="InterPro" id="IPR017494">
    <property type="entry name" value="PSI_PsaG"/>
</dbReference>
<dbReference type="InterPro" id="IPR000549">
    <property type="entry name" value="PSI_PsaG/PsaK"/>
</dbReference>
<dbReference type="InterPro" id="IPR023618">
    <property type="entry name" value="PSI_PsaG/PsaK_dom"/>
</dbReference>
<dbReference type="InterPro" id="IPR016370">
    <property type="entry name" value="PSI_PsaG/PsaK_pln"/>
</dbReference>
<dbReference type="NCBIfam" id="TIGR03051">
    <property type="entry name" value="PS_I_psaG_plant"/>
    <property type="match status" value="1"/>
</dbReference>
<dbReference type="PANTHER" id="PTHR34195:SF1">
    <property type="entry name" value="PHOTOSYSTEM I REACTION CENTER SUBUNIT V, CHLOROPLASTIC"/>
    <property type="match status" value="1"/>
</dbReference>
<dbReference type="PANTHER" id="PTHR34195">
    <property type="entry name" value="PHOTOSYSTEM I REACTION CENTER SUBUNIT V, CHLOROPLASTIC-RELATED"/>
    <property type="match status" value="1"/>
</dbReference>
<dbReference type="Pfam" id="PF01241">
    <property type="entry name" value="PSI_PSAK"/>
    <property type="match status" value="1"/>
</dbReference>
<dbReference type="PROSITE" id="PS01026">
    <property type="entry name" value="PHOTOSYSTEM_I_PSAGK"/>
    <property type="match status" value="1"/>
</dbReference>
<gene>
    <name type="primary">PSAG</name>
</gene>